<dbReference type="EMBL" id="AE016814">
    <property type="protein sequence ID" value="AAS50224.2"/>
    <property type="molecule type" value="Genomic_DNA"/>
</dbReference>
<dbReference type="RefSeq" id="NP_982400.2">
    <property type="nucleotide sequence ID" value="NM_207753.2"/>
</dbReference>
<dbReference type="SMR" id="Q75F70"/>
<dbReference type="FunCoup" id="Q75F70">
    <property type="interactions" value="52"/>
</dbReference>
<dbReference type="STRING" id="284811.Q75F70"/>
<dbReference type="EnsemblFungi" id="AAS50224">
    <property type="protein sequence ID" value="AAS50224"/>
    <property type="gene ID" value="AGOS_AAL142C"/>
</dbReference>
<dbReference type="GeneID" id="4618449"/>
<dbReference type="KEGG" id="ago:AGOS_AAL142C"/>
<dbReference type="eggNOG" id="ENOG502S2G8">
    <property type="taxonomic scope" value="Eukaryota"/>
</dbReference>
<dbReference type="HOGENOM" id="CLU_147520_0_0_1"/>
<dbReference type="InParanoid" id="Q75F70"/>
<dbReference type="OMA" id="KDPIWKT"/>
<dbReference type="OrthoDB" id="5576752at2759"/>
<dbReference type="Proteomes" id="UP000000591">
    <property type="component" value="Chromosome I"/>
</dbReference>
<dbReference type="GO" id="GO:0005743">
    <property type="term" value="C:mitochondrial inner membrane"/>
    <property type="evidence" value="ECO:0007669"/>
    <property type="project" value="UniProtKB-SubCell"/>
</dbReference>
<dbReference type="GO" id="GO:0031966">
    <property type="term" value="C:mitochondrial membrane"/>
    <property type="evidence" value="ECO:0000318"/>
    <property type="project" value="GO_Central"/>
</dbReference>
<dbReference type="GO" id="GO:0034551">
    <property type="term" value="P:mitochondrial respiratory chain complex III assembly"/>
    <property type="evidence" value="ECO:0000318"/>
    <property type="project" value="GO_Central"/>
</dbReference>
<dbReference type="InterPro" id="IPR012420">
    <property type="entry name" value="Cbp4"/>
</dbReference>
<dbReference type="PANTHER" id="PTHR28202">
    <property type="entry name" value="ASSEMBLY FACTOR CBP4"/>
    <property type="match status" value="1"/>
</dbReference>
<dbReference type="PANTHER" id="PTHR28202:SF1">
    <property type="entry name" value="ASSEMBLY FACTOR CBP4"/>
    <property type="match status" value="1"/>
</dbReference>
<dbReference type="Pfam" id="PF07960">
    <property type="entry name" value="CBP4"/>
    <property type="match status" value="1"/>
</dbReference>
<protein>
    <recommendedName>
        <fullName>Assembly factor CBP4</fullName>
    </recommendedName>
    <alternativeName>
        <fullName>Cytochrome b mRNA-processing protein 4</fullName>
    </alternativeName>
</protein>
<evidence type="ECO:0000250" key="1"/>
<evidence type="ECO:0000255" key="2"/>
<evidence type="ECO:0000256" key="3">
    <source>
        <dbReference type="SAM" id="MobiDB-lite"/>
    </source>
</evidence>
<evidence type="ECO:0000305" key="4"/>
<gene>
    <name type="primary">CBP4</name>
    <name type="ordered locus">AAL142C</name>
</gene>
<sequence>MERPVWFRWLRVYAIGFGIIGAGVLLFKYTTPTDEELIAALSPELRQQYERERKLRQAEQQELMRIVKQTAASETPVWNTGPIKSPWERKGVSAESREQFQQVKAEQVQREELQRIREELETIRQQSANKTQEIASKKSWWPW</sequence>
<name>CBP4_EREGS</name>
<comment type="function">
    <text evidence="1">Essential for the assembly of ubiquinol-cytochrome c reductase. It has a direct effect on the correct occurrence of the Rieske protein, core 4, core 5 and apocytochrome b (By similarity).</text>
</comment>
<comment type="subcellular location">
    <subcellularLocation>
        <location evidence="1">Mitochondrion inner membrane</location>
        <topology evidence="1">Single-pass membrane protein</topology>
    </subcellularLocation>
</comment>
<comment type="similarity">
    <text evidence="4">Belongs to the CBP4 family.</text>
</comment>
<reference key="1">
    <citation type="journal article" date="2004" name="Science">
        <title>The Ashbya gossypii genome as a tool for mapping the ancient Saccharomyces cerevisiae genome.</title>
        <authorList>
            <person name="Dietrich F.S."/>
            <person name="Voegeli S."/>
            <person name="Brachat S."/>
            <person name="Lerch A."/>
            <person name="Gates K."/>
            <person name="Steiner S."/>
            <person name="Mohr C."/>
            <person name="Poehlmann R."/>
            <person name="Luedi P."/>
            <person name="Choi S."/>
            <person name="Wing R.A."/>
            <person name="Flavier A."/>
            <person name="Gaffney T.D."/>
            <person name="Philippsen P."/>
        </authorList>
    </citation>
    <scope>NUCLEOTIDE SEQUENCE [LARGE SCALE GENOMIC DNA]</scope>
    <source>
        <strain>ATCC 10895 / CBS 109.51 / FGSC 9923 / NRRL Y-1056</strain>
    </source>
</reference>
<reference key="2">
    <citation type="journal article" date="2013" name="G3 (Bethesda)">
        <title>Genomes of Ashbya fungi isolated from insects reveal four mating-type loci, numerous translocations, lack of transposons, and distinct gene duplications.</title>
        <authorList>
            <person name="Dietrich F.S."/>
            <person name="Voegeli S."/>
            <person name="Kuo S."/>
            <person name="Philippsen P."/>
        </authorList>
    </citation>
    <scope>GENOME REANNOTATION</scope>
    <scope>SEQUENCE REVISION TO 130</scope>
    <source>
        <strain>ATCC 10895 / CBS 109.51 / FGSC 9923 / NRRL Y-1056</strain>
    </source>
</reference>
<keyword id="KW-0143">Chaperone</keyword>
<keyword id="KW-0175">Coiled coil</keyword>
<keyword id="KW-0472">Membrane</keyword>
<keyword id="KW-0496">Mitochondrion</keyword>
<keyword id="KW-0999">Mitochondrion inner membrane</keyword>
<keyword id="KW-1185">Reference proteome</keyword>
<keyword id="KW-0812">Transmembrane</keyword>
<keyword id="KW-1133">Transmembrane helix</keyword>
<feature type="chain" id="PRO_0000330117" description="Assembly factor CBP4">
    <location>
        <begin position="1"/>
        <end position="143"/>
    </location>
</feature>
<feature type="transmembrane region" description="Helical" evidence="2">
    <location>
        <begin position="5"/>
        <end position="27"/>
    </location>
</feature>
<feature type="region of interest" description="Disordered" evidence="3">
    <location>
        <begin position="124"/>
        <end position="143"/>
    </location>
</feature>
<feature type="coiled-coil region" evidence="2">
    <location>
        <begin position="95"/>
        <end position="139"/>
    </location>
</feature>
<proteinExistence type="inferred from homology"/>
<organism>
    <name type="scientific">Eremothecium gossypii (strain ATCC 10895 / CBS 109.51 / FGSC 9923 / NRRL Y-1056)</name>
    <name type="common">Yeast</name>
    <name type="synonym">Ashbya gossypii</name>
    <dbReference type="NCBI Taxonomy" id="284811"/>
    <lineage>
        <taxon>Eukaryota</taxon>
        <taxon>Fungi</taxon>
        <taxon>Dikarya</taxon>
        <taxon>Ascomycota</taxon>
        <taxon>Saccharomycotina</taxon>
        <taxon>Saccharomycetes</taxon>
        <taxon>Saccharomycetales</taxon>
        <taxon>Saccharomycetaceae</taxon>
        <taxon>Eremothecium</taxon>
    </lineage>
</organism>
<accession>Q75F70</accession>